<reference key="1">
    <citation type="journal article" date="2009" name="Environ. Microbiol.">
        <title>Contribution of mobile genetic elements to Desulfovibrio vulgaris genome plasticity.</title>
        <authorList>
            <person name="Walker C.B."/>
            <person name="Stolyar S."/>
            <person name="Chivian D."/>
            <person name="Pinel N."/>
            <person name="Gabster J.A."/>
            <person name="Dehal P.S."/>
            <person name="He Z."/>
            <person name="Yang Z.K."/>
            <person name="Yen H.C."/>
            <person name="Zhou J."/>
            <person name="Wall J.D."/>
            <person name="Hazen T.C."/>
            <person name="Arkin A.P."/>
            <person name="Stahl D.A."/>
        </authorList>
    </citation>
    <scope>NUCLEOTIDE SEQUENCE [LARGE SCALE GENOMIC DNA]</scope>
    <source>
        <strain>DP4</strain>
    </source>
</reference>
<sequence length="357" mass="38431">MAKKPSLSPEEMRREALETALSTIERKYGLGAVMKLSDEAHVAIPVIPTGSIGLDLALGVGGVPRGRVTEIYGPESSGKTTLTLHIIAEAQKRGGTAAFIDAEHALDVAYARRLGVNTEELLISQPDFGEQALDIADMLVRSAAVDLVVIDSVAALIPQAELEGSMGDTQVGGQARLMSHALRKLTGTIHKSRTAVIFINQIRMKIGTMGYGSPETTTGGNALKFYSSVRMDIRKIQTLKDKEEVYGSRTRVKIVKNKVAPPFREALFDILYGTGISRTGEIIDLGSDAGIIDKSGSWFAFGSERLGQGKENVRALLEENAPLREAIEAKLIEHLGMTPTKFASSGEEPANDEENDL</sequence>
<comment type="function">
    <text evidence="1">Can catalyze the hydrolysis of ATP in the presence of single-stranded DNA, the ATP-dependent uptake of single-stranded DNA by duplex DNA, and the ATP-dependent hybridization of homologous single-stranded DNAs. It interacts with LexA causing its activation and leading to its autocatalytic cleavage.</text>
</comment>
<comment type="subcellular location">
    <subcellularLocation>
        <location evidence="1">Cytoplasm</location>
    </subcellularLocation>
</comment>
<comment type="similarity">
    <text evidence="1">Belongs to the RecA family.</text>
</comment>
<protein>
    <recommendedName>
        <fullName evidence="1">Protein RecA</fullName>
    </recommendedName>
    <alternativeName>
        <fullName evidence="1">Recombinase A</fullName>
    </alternativeName>
</protein>
<gene>
    <name evidence="1" type="primary">recA</name>
    <name type="ordered locus">Dvul_1905</name>
</gene>
<evidence type="ECO:0000255" key="1">
    <source>
        <dbReference type="HAMAP-Rule" id="MF_00268"/>
    </source>
</evidence>
<dbReference type="EMBL" id="CP000527">
    <property type="protein sequence ID" value="ABM28921.1"/>
    <property type="molecule type" value="Genomic_DNA"/>
</dbReference>
<dbReference type="RefSeq" id="WP_010938389.1">
    <property type="nucleotide sequence ID" value="NC_008751.1"/>
</dbReference>
<dbReference type="SMR" id="A1VEQ5"/>
<dbReference type="KEGG" id="dvl:Dvul_1905"/>
<dbReference type="HOGENOM" id="CLU_040469_1_2_7"/>
<dbReference type="Proteomes" id="UP000009173">
    <property type="component" value="Chromosome"/>
</dbReference>
<dbReference type="GO" id="GO:0005829">
    <property type="term" value="C:cytosol"/>
    <property type="evidence" value="ECO:0007669"/>
    <property type="project" value="TreeGrafter"/>
</dbReference>
<dbReference type="GO" id="GO:0005524">
    <property type="term" value="F:ATP binding"/>
    <property type="evidence" value="ECO:0007669"/>
    <property type="project" value="UniProtKB-UniRule"/>
</dbReference>
<dbReference type="GO" id="GO:0016887">
    <property type="term" value="F:ATP hydrolysis activity"/>
    <property type="evidence" value="ECO:0007669"/>
    <property type="project" value="InterPro"/>
</dbReference>
<dbReference type="GO" id="GO:0140664">
    <property type="term" value="F:ATP-dependent DNA damage sensor activity"/>
    <property type="evidence" value="ECO:0007669"/>
    <property type="project" value="InterPro"/>
</dbReference>
<dbReference type="GO" id="GO:0003684">
    <property type="term" value="F:damaged DNA binding"/>
    <property type="evidence" value="ECO:0007669"/>
    <property type="project" value="UniProtKB-UniRule"/>
</dbReference>
<dbReference type="GO" id="GO:0003697">
    <property type="term" value="F:single-stranded DNA binding"/>
    <property type="evidence" value="ECO:0007669"/>
    <property type="project" value="UniProtKB-UniRule"/>
</dbReference>
<dbReference type="GO" id="GO:0006310">
    <property type="term" value="P:DNA recombination"/>
    <property type="evidence" value="ECO:0007669"/>
    <property type="project" value="UniProtKB-UniRule"/>
</dbReference>
<dbReference type="GO" id="GO:0006281">
    <property type="term" value="P:DNA repair"/>
    <property type="evidence" value="ECO:0007669"/>
    <property type="project" value="UniProtKB-UniRule"/>
</dbReference>
<dbReference type="GO" id="GO:0009432">
    <property type="term" value="P:SOS response"/>
    <property type="evidence" value="ECO:0007669"/>
    <property type="project" value="UniProtKB-UniRule"/>
</dbReference>
<dbReference type="CDD" id="cd00983">
    <property type="entry name" value="RecA"/>
    <property type="match status" value="1"/>
</dbReference>
<dbReference type="FunFam" id="3.40.50.300:FF:000087">
    <property type="entry name" value="Recombinase RecA"/>
    <property type="match status" value="1"/>
</dbReference>
<dbReference type="Gene3D" id="3.40.50.300">
    <property type="entry name" value="P-loop containing nucleotide triphosphate hydrolases"/>
    <property type="match status" value="1"/>
</dbReference>
<dbReference type="HAMAP" id="MF_00268">
    <property type="entry name" value="RecA"/>
    <property type="match status" value="1"/>
</dbReference>
<dbReference type="InterPro" id="IPR003593">
    <property type="entry name" value="AAA+_ATPase"/>
</dbReference>
<dbReference type="InterPro" id="IPR013765">
    <property type="entry name" value="DNA_recomb/repair_RecA"/>
</dbReference>
<dbReference type="InterPro" id="IPR020584">
    <property type="entry name" value="DNA_recomb/repair_RecA_CS"/>
</dbReference>
<dbReference type="InterPro" id="IPR027417">
    <property type="entry name" value="P-loop_NTPase"/>
</dbReference>
<dbReference type="InterPro" id="IPR049261">
    <property type="entry name" value="RecA-like_C"/>
</dbReference>
<dbReference type="InterPro" id="IPR049428">
    <property type="entry name" value="RecA-like_N"/>
</dbReference>
<dbReference type="InterPro" id="IPR020588">
    <property type="entry name" value="RecA_ATP-bd"/>
</dbReference>
<dbReference type="InterPro" id="IPR023400">
    <property type="entry name" value="RecA_C_sf"/>
</dbReference>
<dbReference type="InterPro" id="IPR020587">
    <property type="entry name" value="RecA_monomer-monomer_interface"/>
</dbReference>
<dbReference type="NCBIfam" id="TIGR02012">
    <property type="entry name" value="tigrfam_recA"/>
    <property type="match status" value="1"/>
</dbReference>
<dbReference type="PANTHER" id="PTHR45900:SF1">
    <property type="entry name" value="MITOCHONDRIAL DNA REPAIR PROTEIN RECA HOMOLOG-RELATED"/>
    <property type="match status" value="1"/>
</dbReference>
<dbReference type="PANTHER" id="PTHR45900">
    <property type="entry name" value="RECA"/>
    <property type="match status" value="1"/>
</dbReference>
<dbReference type="Pfam" id="PF00154">
    <property type="entry name" value="RecA"/>
    <property type="match status" value="1"/>
</dbReference>
<dbReference type="Pfam" id="PF21096">
    <property type="entry name" value="RecA_C"/>
    <property type="match status" value="1"/>
</dbReference>
<dbReference type="PRINTS" id="PR00142">
    <property type="entry name" value="RECA"/>
</dbReference>
<dbReference type="SMART" id="SM00382">
    <property type="entry name" value="AAA"/>
    <property type="match status" value="1"/>
</dbReference>
<dbReference type="SUPFAM" id="SSF52540">
    <property type="entry name" value="P-loop containing nucleoside triphosphate hydrolases"/>
    <property type="match status" value="1"/>
</dbReference>
<dbReference type="SUPFAM" id="SSF54752">
    <property type="entry name" value="RecA protein, C-terminal domain"/>
    <property type="match status" value="1"/>
</dbReference>
<dbReference type="PROSITE" id="PS00321">
    <property type="entry name" value="RECA_1"/>
    <property type="match status" value="1"/>
</dbReference>
<dbReference type="PROSITE" id="PS50162">
    <property type="entry name" value="RECA_2"/>
    <property type="match status" value="1"/>
</dbReference>
<dbReference type="PROSITE" id="PS50163">
    <property type="entry name" value="RECA_3"/>
    <property type="match status" value="1"/>
</dbReference>
<accession>A1VEQ5</accession>
<feature type="chain" id="PRO_1000047911" description="Protein RecA">
    <location>
        <begin position="1"/>
        <end position="357"/>
    </location>
</feature>
<feature type="binding site" evidence="1">
    <location>
        <begin position="73"/>
        <end position="80"/>
    </location>
    <ligand>
        <name>ATP</name>
        <dbReference type="ChEBI" id="CHEBI:30616"/>
    </ligand>
</feature>
<proteinExistence type="inferred from homology"/>
<keyword id="KW-0067">ATP-binding</keyword>
<keyword id="KW-0963">Cytoplasm</keyword>
<keyword id="KW-0227">DNA damage</keyword>
<keyword id="KW-0233">DNA recombination</keyword>
<keyword id="KW-0234">DNA repair</keyword>
<keyword id="KW-0238">DNA-binding</keyword>
<keyword id="KW-0547">Nucleotide-binding</keyword>
<keyword id="KW-0742">SOS response</keyword>
<name>RECA_NITV4</name>
<organism>
    <name type="scientific">Nitratidesulfovibrio vulgaris (strain DP4)</name>
    <name type="common">Desulfovibrio vulgaris</name>
    <dbReference type="NCBI Taxonomy" id="391774"/>
    <lineage>
        <taxon>Bacteria</taxon>
        <taxon>Pseudomonadati</taxon>
        <taxon>Thermodesulfobacteriota</taxon>
        <taxon>Desulfovibrionia</taxon>
        <taxon>Desulfovibrionales</taxon>
        <taxon>Desulfovibrionaceae</taxon>
        <taxon>Nitratidesulfovibrio</taxon>
    </lineage>
</organism>